<evidence type="ECO:0000250" key="1"/>
<evidence type="ECO:0000255" key="2">
    <source>
        <dbReference type="HAMAP-Rule" id="MF_01109"/>
    </source>
</evidence>
<evidence type="ECO:0000305" key="3"/>
<keyword id="KW-0056">Arginine metabolism</keyword>
<keyword id="KW-0963">Cytoplasm</keyword>
<keyword id="KW-1185">Reference proteome</keyword>
<keyword id="KW-0808">Transferase</keyword>
<sequence length="334" mass="37647">MAFNMKNRHLLSLVHHTEREIKYLLDLSRDLKRAKYAGTEQQKLKGKNIALIFEKTSTRTRCAFEVAAYDQGAQVTYIDPNSSQIGHKESMKDTARVLGRMYDGIEYRGFKQSIVQELADYAGVPVFNGLTDEFHPTQMLADVLTMIEHCDKPLSEISYVYIGDARNNMGNSLLLIGAKLGMDVRICGPKALLPEANLVEMCEKFAKESGARITVTEDIDKAVKGVDFIHTDVWVSMGEPLETWGERIKLLLPYQVTPELMKRTGNPKVKFMHCLPAFHNSETKVGRQIAEKYPELANGIEVTEEVFESPMNIAFEQAENRMHTIKAVMVASLA</sequence>
<name>OTCC_HAEIN</name>
<organism>
    <name type="scientific">Haemophilus influenzae (strain ATCC 51907 / DSM 11121 / KW20 / Rd)</name>
    <dbReference type="NCBI Taxonomy" id="71421"/>
    <lineage>
        <taxon>Bacteria</taxon>
        <taxon>Pseudomonadati</taxon>
        <taxon>Pseudomonadota</taxon>
        <taxon>Gammaproteobacteria</taxon>
        <taxon>Pasteurellales</taxon>
        <taxon>Pasteurellaceae</taxon>
        <taxon>Haemophilus</taxon>
    </lineage>
</organism>
<dbReference type="EC" id="2.1.3.3"/>
<dbReference type="EMBL" id="L42023">
    <property type="protein sequence ID" value="AAC22253.1"/>
    <property type="molecule type" value="Genomic_DNA"/>
</dbReference>
<dbReference type="PIR" id="H64079">
    <property type="entry name" value="H64079"/>
</dbReference>
<dbReference type="RefSeq" id="NP_438753.1">
    <property type="nucleotide sequence ID" value="NC_000907.1"/>
</dbReference>
<dbReference type="SMR" id="P44770"/>
<dbReference type="STRING" id="71421.HI_0596"/>
<dbReference type="EnsemblBacteria" id="AAC22253">
    <property type="protein sequence ID" value="AAC22253"/>
    <property type="gene ID" value="HI_0596"/>
</dbReference>
<dbReference type="KEGG" id="hin:HI_0596"/>
<dbReference type="PATRIC" id="fig|71421.8.peg.617"/>
<dbReference type="eggNOG" id="COG0078">
    <property type="taxonomic scope" value="Bacteria"/>
</dbReference>
<dbReference type="HOGENOM" id="CLU_043846_3_1_6"/>
<dbReference type="OrthoDB" id="9802587at2"/>
<dbReference type="PhylomeDB" id="P44770"/>
<dbReference type="BioCyc" id="HINF71421:G1GJ1-606-MONOMER"/>
<dbReference type="UniPathway" id="UPA00254">
    <property type="reaction ID" value="UER00365"/>
</dbReference>
<dbReference type="Proteomes" id="UP000000579">
    <property type="component" value="Chromosome"/>
</dbReference>
<dbReference type="GO" id="GO:0005737">
    <property type="term" value="C:cytoplasm"/>
    <property type="evidence" value="ECO:0007669"/>
    <property type="project" value="UniProtKB-SubCell"/>
</dbReference>
<dbReference type="GO" id="GO:0016597">
    <property type="term" value="F:amino acid binding"/>
    <property type="evidence" value="ECO:0007669"/>
    <property type="project" value="InterPro"/>
</dbReference>
<dbReference type="GO" id="GO:0004585">
    <property type="term" value="F:ornithine carbamoyltransferase activity"/>
    <property type="evidence" value="ECO:0000318"/>
    <property type="project" value="GO_Central"/>
</dbReference>
<dbReference type="GO" id="GO:0042450">
    <property type="term" value="P:arginine biosynthetic process via ornithine"/>
    <property type="evidence" value="ECO:0000318"/>
    <property type="project" value="GO_Central"/>
</dbReference>
<dbReference type="GO" id="GO:0019547">
    <property type="term" value="P:arginine catabolic process to ornithine"/>
    <property type="evidence" value="ECO:0007669"/>
    <property type="project" value="UniProtKB-UniRule"/>
</dbReference>
<dbReference type="GO" id="GO:0019240">
    <property type="term" value="P:citrulline biosynthetic process"/>
    <property type="evidence" value="ECO:0000318"/>
    <property type="project" value="GO_Central"/>
</dbReference>
<dbReference type="FunFam" id="3.40.50.1370:FF:000003">
    <property type="entry name" value="Ornithine carbamoyltransferase"/>
    <property type="match status" value="1"/>
</dbReference>
<dbReference type="Gene3D" id="3.40.50.1370">
    <property type="entry name" value="Aspartate/ornithine carbamoyltransferase"/>
    <property type="match status" value="2"/>
</dbReference>
<dbReference type="HAMAP" id="MF_01109">
    <property type="entry name" value="OTCase"/>
    <property type="match status" value="1"/>
</dbReference>
<dbReference type="InterPro" id="IPR006132">
    <property type="entry name" value="Asp/Orn_carbamoyltranf_P-bd"/>
</dbReference>
<dbReference type="InterPro" id="IPR006130">
    <property type="entry name" value="Asp/Orn_carbamoylTrfase"/>
</dbReference>
<dbReference type="InterPro" id="IPR036901">
    <property type="entry name" value="Asp/Orn_carbamoylTrfase_sf"/>
</dbReference>
<dbReference type="InterPro" id="IPR006131">
    <property type="entry name" value="Asp_carbamoyltransf_Asp/Orn-bd"/>
</dbReference>
<dbReference type="InterPro" id="IPR002292">
    <property type="entry name" value="Orn/put_carbamltrans"/>
</dbReference>
<dbReference type="InterPro" id="IPR024904">
    <property type="entry name" value="OTCase_ArgI"/>
</dbReference>
<dbReference type="NCBIfam" id="TIGR00658">
    <property type="entry name" value="orni_carb_tr"/>
    <property type="match status" value="1"/>
</dbReference>
<dbReference type="NCBIfam" id="NF002470">
    <property type="entry name" value="PRK01713.1"/>
    <property type="match status" value="1"/>
</dbReference>
<dbReference type="NCBIfam" id="NF003286">
    <property type="entry name" value="PRK04284.1"/>
    <property type="match status" value="1"/>
</dbReference>
<dbReference type="PANTHER" id="PTHR45753:SF2">
    <property type="entry name" value="ORNITHINE CARBAMOYLTRANSFERASE"/>
    <property type="match status" value="1"/>
</dbReference>
<dbReference type="PANTHER" id="PTHR45753">
    <property type="entry name" value="ORNITHINE CARBAMOYLTRANSFERASE, MITOCHONDRIAL"/>
    <property type="match status" value="1"/>
</dbReference>
<dbReference type="Pfam" id="PF00185">
    <property type="entry name" value="OTCace"/>
    <property type="match status" value="1"/>
</dbReference>
<dbReference type="Pfam" id="PF02729">
    <property type="entry name" value="OTCace_N"/>
    <property type="match status" value="1"/>
</dbReference>
<dbReference type="PRINTS" id="PR00100">
    <property type="entry name" value="AOTCASE"/>
</dbReference>
<dbReference type="PRINTS" id="PR00102">
    <property type="entry name" value="OTCASE"/>
</dbReference>
<dbReference type="SUPFAM" id="SSF53671">
    <property type="entry name" value="Aspartate/ornithine carbamoyltransferase"/>
    <property type="match status" value="1"/>
</dbReference>
<dbReference type="PROSITE" id="PS00097">
    <property type="entry name" value="CARBAMOYLTRANSFERASE"/>
    <property type="match status" value="1"/>
</dbReference>
<comment type="function">
    <text evidence="1">Reversibly catalyzes the transfer of the carbamoyl group from carbamoyl phosphate (CP) to the N(epsilon) atom of ornithine (ORN) to produce L-citrulline.</text>
</comment>
<comment type="catalytic activity">
    <reaction>
        <text>carbamoyl phosphate + L-ornithine = L-citrulline + phosphate + H(+)</text>
        <dbReference type="Rhea" id="RHEA:19513"/>
        <dbReference type="ChEBI" id="CHEBI:15378"/>
        <dbReference type="ChEBI" id="CHEBI:43474"/>
        <dbReference type="ChEBI" id="CHEBI:46911"/>
        <dbReference type="ChEBI" id="CHEBI:57743"/>
        <dbReference type="ChEBI" id="CHEBI:58228"/>
        <dbReference type="EC" id="2.1.3.3"/>
    </reaction>
</comment>
<comment type="pathway">
    <text>Amino-acid degradation; L-arginine degradation via ADI pathway; carbamoyl phosphate from L-arginine: step 2/2.</text>
</comment>
<comment type="subcellular location">
    <subcellularLocation>
        <location evidence="1">Cytoplasm</location>
    </subcellularLocation>
</comment>
<comment type="similarity">
    <text evidence="3">Belongs to the aspartate/ornithine carbamoyltransferase superfamily. OTCase family.</text>
</comment>
<proteinExistence type="inferred from homology"/>
<reference key="1">
    <citation type="journal article" date="1995" name="Science">
        <title>Whole-genome random sequencing and assembly of Haemophilus influenzae Rd.</title>
        <authorList>
            <person name="Fleischmann R.D."/>
            <person name="Adams M.D."/>
            <person name="White O."/>
            <person name="Clayton R.A."/>
            <person name="Kirkness E.F."/>
            <person name="Kerlavage A.R."/>
            <person name="Bult C.J."/>
            <person name="Tomb J.-F."/>
            <person name="Dougherty B.A."/>
            <person name="Merrick J.M."/>
            <person name="McKenney K."/>
            <person name="Sutton G.G."/>
            <person name="FitzHugh W."/>
            <person name="Fields C.A."/>
            <person name="Gocayne J.D."/>
            <person name="Scott J.D."/>
            <person name="Shirley R."/>
            <person name="Liu L.-I."/>
            <person name="Glodek A."/>
            <person name="Kelley J.M."/>
            <person name="Weidman J.F."/>
            <person name="Phillips C.A."/>
            <person name="Spriggs T."/>
            <person name="Hedblom E."/>
            <person name="Cotton M.D."/>
            <person name="Utterback T.R."/>
            <person name="Hanna M.C."/>
            <person name="Nguyen D.T."/>
            <person name="Saudek D.M."/>
            <person name="Brandon R.C."/>
            <person name="Fine L.D."/>
            <person name="Fritchman J.L."/>
            <person name="Fuhrmann J.L."/>
            <person name="Geoghagen N.S.M."/>
            <person name="Gnehm C.L."/>
            <person name="McDonald L.A."/>
            <person name="Small K.V."/>
            <person name="Fraser C.M."/>
            <person name="Smith H.O."/>
            <person name="Venter J.C."/>
        </authorList>
    </citation>
    <scope>NUCLEOTIDE SEQUENCE [LARGE SCALE GENOMIC DNA]</scope>
    <source>
        <strain>ATCC 51907 / DSM 11121 / KW20 / Rd</strain>
    </source>
</reference>
<feature type="chain" id="PRO_0000112930" description="Ornithine carbamoyltransferase, catabolic">
    <location>
        <begin position="1"/>
        <end position="334"/>
    </location>
</feature>
<feature type="binding site" evidence="2">
    <location>
        <begin position="57"/>
        <end position="60"/>
    </location>
    <ligand>
        <name>carbamoyl phosphate</name>
        <dbReference type="ChEBI" id="CHEBI:58228"/>
    </ligand>
</feature>
<feature type="binding site" evidence="2">
    <location>
        <position position="84"/>
    </location>
    <ligand>
        <name>carbamoyl phosphate</name>
        <dbReference type="ChEBI" id="CHEBI:58228"/>
    </ligand>
</feature>
<feature type="binding site" evidence="2">
    <location>
        <position position="108"/>
    </location>
    <ligand>
        <name>carbamoyl phosphate</name>
        <dbReference type="ChEBI" id="CHEBI:58228"/>
    </ligand>
</feature>
<feature type="binding site" evidence="2">
    <location>
        <begin position="135"/>
        <end position="138"/>
    </location>
    <ligand>
        <name>carbamoyl phosphate</name>
        <dbReference type="ChEBI" id="CHEBI:58228"/>
    </ligand>
</feature>
<feature type="binding site" evidence="2">
    <location>
        <position position="168"/>
    </location>
    <ligand>
        <name>L-ornithine</name>
        <dbReference type="ChEBI" id="CHEBI:46911"/>
    </ligand>
</feature>
<feature type="binding site" evidence="2">
    <location>
        <position position="232"/>
    </location>
    <ligand>
        <name>L-ornithine</name>
        <dbReference type="ChEBI" id="CHEBI:46911"/>
    </ligand>
</feature>
<feature type="binding site" evidence="2">
    <location>
        <begin position="236"/>
        <end position="237"/>
    </location>
    <ligand>
        <name>L-ornithine</name>
        <dbReference type="ChEBI" id="CHEBI:46911"/>
    </ligand>
</feature>
<feature type="binding site" evidence="2">
    <location>
        <begin position="274"/>
        <end position="275"/>
    </location>
    <ligand>
        <name>carbamoyl phosphate</name>
        <dbReference type="ChEBI" id="CHEBI:58228"/>
    </ligand>
</feature>
<feature type="binding site" evidence="2">
    <location>
        <position position="321"/>
    </location>
    <ligand>
        <name>carbamoyl phosphate</name>
        <dbReference type="ChEBI" id="CHEBI:58228"/>
    </ligand>
</feature>
<protein>
    <recommendedName>
        <fullName>Ornithine carbamoyltransferase, catabolic</fullName>
        <shortName>OTCase</shortName>
        <ecNumber>2.1.3.3</ecNumber>
    </recommendedName>
</protein>
<gene>
    <name type="primary">arcB</name>
    <name type="ordered locus">HI_0596</name>
</gene>
<accession>P44770</accession>